<comment type="function">
    <text evidence="1">This protein binds to 23S rRNA in the presence of protein L20.</text>
</comment>
<comment type="subunit">
    <text evidence="1">Part of the 50S ribosomal subunit. Contacts protein L20.</text>
</comment>
<comment type="similarity">
    <text evidence="1">Belongs to the bacterial ribosomal protein bL21 family.</text>
</comment>
<sequence length="105" mass="11973">MFAVIKAGGKQYKVDQNSVIKVEKIEGELGSKIQLNQVLMMGEYSKPSFIGTPLVKGAVVTAEITNQLRDNKIIVFKKKRRKNYRRKAGHRQELTELKILDITKQ</sequence>
<reference key="1">
    <citation type="submission" date="2007-09" db="EMBL/GenBank/DDBJ databases">
        <title>Complete genome sequencing of Rickettsia bellii.</title>
        <authorList>
            <person name="Madan A."/>
            <person name="Lee H."/>
            <person name="Madan A."/>
            <person name="Yoon J.-G."/>
            <person name="Ryu G.-Y."/>
            <person name="Dasch G."/>
            <person name="Ereemeva M."/>
        </authorList>
    </citation>
    <scope>NUCLEOTIDE SEQUENCE [LARGE SCALE GENOMIC DNA]</scope>
    <source>
        <strain>OSU 85-389</strain>
    </source>
</reference>
<evidence type="ECO:0000255" key="1">
    <source>
        <dbReference type="HAMAP-Rule" id="MF_01363"/>
    </source>
</evidence>
<evidence type="ECO:0000305" key="2"/>
<name>RL21_RICB8</name>
<gene>
    <name evidence="1" type="primary">rplU</name>
    <name type="ordered locus">A1I_07830</name>
</gene>
<organism>
    <name type="scientific">Rickettsia bellii (strain OSU 85-389)</name>
    <dbReference type="NCBI Taxonomy" id="391896"/>
    <lineage>
        <taxon>Bacteria</taxon>
        <taxon>Pseudomonadati</taxon>
        <taxon>Pseudomonadota</taxon>
        <taxon>Alphaproteobacteria</taxon>
        <taxon>Rickettsiales</taxon>
        <taxon>Rickettsiaceae</taxon>
        <taxon>Rickettsieae</taxon>
        <taxon>Rickettsia</taxon>
        <taxon>belli group</taxon>
    </lineage>
</organism>
<proteinExistence type="inferred from homology"/>
<dbReference type="EMBL" id="CP000849">
    <property type="protein sequence ID" value="ABV79864.1"/>
    <property type="molecule type" value="Genomic_DNA"/>
</dbReference>
<dbReference type="RefSeq" id="WP_011478056.1">
    <property type="nucleotide sequence ID" value="NC_009883.1"/>
</dbReference>
<dbReference type="SMR" id="A8GYB4"/>
<dbReference type="KEGG" id="rbo:A1I_07830"/>
<dbReference type="HOGENOM" id="CLU_061463_3_2_5"/>
<dbReference type="GO" id="GO:0005737">
    <property type="term" value="C:cytoplasm"/>
    <property type="evidence" value="ECO:0007669"/>
    <property type="project" value="UniProtKB-ARBA"/>
</dbReference>
<dbReference type="GO" id="GO:1990904">
    <property type="term" value="C:ribonucleoprotein complex"/>
    <property type="evidence" value="ECO:0007669"/>
    <property type="project" value="UniProtKB-KW"/>
</dbReference>
<dbReference type="GO" id="GO:0005840">
    <property type="term" value="C:ribosome"/>
    <property type="evidence" value="ECO:0007669"/>
    <property type="project" value="UniProtKB-KW"/>
</dbReference>
<dbReference type="GO" id="GO:0019843">
    <property type="term" value="F:rRNA binding"/>
    <property type="evidence" value="ECO:0007669"/>
    <property type="project" value="UniProtKB-UniRule"/>
</dbReference>
<dbReference type="GO" id="GO:0003735">
    <property type="term" value="F:structural constituent of ribosome"/>
    <property type="evidence" value="ECO:0007669"/>
    <property type="project" value="InterPro"/>
</dbReference>
<dbReference type="GO" id="GO:0006412">
    <property type="term" value="P:translation"/>
    <property type="evidence" value="ECO:0007669"/>
    <property type="project" value="UniProtKB-UniRule"/>
</dbReference>
<dbReference type="HAMAP" id="MF_01363">
    <property type="entry name" value="Ribosomal_bL21"/>
    <property type="match status" value="1"/>
</dbReference>
<dbReference type="InterPro" id="IPR028909">
    <property type="entry name" value="bL21-like"/>
</dbReference>
<dbReference type="InterPro" id="IPR036164">
    <property type="entry name" value="bL21-like_sf"/>
</dbReference>
<dbReference type="InterPro" id="IPR001787">
    <property type="entry name" value="Ribosomal_bL21"/>
</dbReference>
<dbReference type="InterPro" id="IPR018258">
    <property type="entry name" value="Ribosomal_bL21_CS"/>
</dbReference>
<dbReference type="NCBIfam" id="TIGR00061">
    <property type="entry name" value="L21"/>
    <property type="match status" value="1"/>
</dbReference>
<dbReference type="PANTHER" id="PTHR21349">
    <property type="entry name" value="50S RIBOSOMAL PROTEIN L21"/>
    <property type="match status" value="1"/>
</dbReference>
<dbReference type="PANTHER" id="PTHR21349:SF0">
    <property type="entry name" value="LARGE RIBOSOMAL SUBUNIT PROTEIN BL21M"/>
    <property type="match status" value="1"/>
</dbReference>
<dbReference type="Pfam" id="PF00829">
    <property type="entry name" value="Ribosomal_L21p"/>
    <property type="match status" value="1"/>
</dbReference>
<dbReference type="SUPFAM" id="SSF141091">
    <property type="entry name" value="L21p-like"/>
    <property type="match status" value="1"/>
</dbReference>
<dbReference type="PROSITE" id="PS01169">
    <property type="entry name" value="RIBOSOMAL_L21"/>
    <property type="match status" value="1"/>
</dbReference>
<keyword id="KW-0687">Ribonucleoprotein</keyword>
<keyword id="KW-0689">Ribosomal protein</keyword>
<keyword id="KW-0694">RNA-binding</keyword>
<keyword id="KW-0699">rRNA-binding</keyword>
<feature type="chain" id="PRO_1000067886" description="Large ribosomal subunit protein bL21">
    <location>
        <begin position="1"/>
        <end position="105"/>
    </location>
</feature>
<accession>A8GYB4</accession>
<protein>
    <recommendedName>
        <fullName evidence="1">Large ribosomal subunit protein bL21</fullName>
    </recommendedName>
    <alternativeName>
        <fullName evidence="2">50S ribosomal protein L21</fullName>
    </alternativeName>
</protein>